<sequence length="154" mass="17439">MGLSDQEWQHVLTIWGKVESDLAGHGHQVLMRLFQDHPETLDRFEKFKGLKTPDQMKGSEDLKKHGVTVLTQLGKILKQKGNHESELKPLAQTHATKHKIPVKYLEFISEAIIKVIAEKHASSFGADSQAAMKKALELFRNDMASKYKEFGFQG</sequence>
<feature type="initiator methionine" description="Removed" evidence="6">
    <location>
        <position position="1"/>
    </location>
</feature>
<feature type="chain" id="PRO_0000053358" description="Myoglobin">
    <location>
        <begin position="2"/>
        <end position="154"/>
    </location>
</feature>
<feature type="domain" description="Globin" evidence="5">
    <location>
        <begin position="2"/>
        <end position="148"/>
    </location>
</feature>
<feature type="binding site" evidence="4">
    <location>
        <position position="65"/>
    </location>
    <ligand>
        <name>nitrite</name>
        <dbReference type="ChEBI" id="CHEBI:16301"/>
    </ligand>
</feature>
<feature type="binding site" evidence="3 5">
    <location>
        <position position="65"/>
    </location>
    <ligand>
        <name>O2</name>
        <dbReference type="ChEBI" id="CHEBI:15379"/>
    </ligand>
</feature>
<feature type="binding site" description="proximal binding residue" evidence="1">
    <location>
        <position position="94"/>
    </location>
    <ligand>
        <name>heme b</name>
        <dbReference type="ChEBI" id="CHEBI:60344"/>
    </ligand>
    <ligandPart>
        <name>Fe</name>
        <dbReference type="ChEBI" id="CHEBI:18248"/>
    </ligandPart>
</feature>
<accession>Q7LZM1</accession>
<keyword id="KW-0963">Cytoplasm</keyword>
<keyword id="KW-0903">Direct protein sequencing</keyword>
<keyword id="KW-0349">Heme</keyword>
<keyword id="KW-0408">Iron</keyword>
<keyword id="KW-0479">Metal-binding</keyword>
<keyword id="KW-0514">Muscle protein</keyword>
<keyword id="KW-0560">Oxidoreductase</keyword>
<keyword id="KW-0561">Oxygen transport</keyword>
<keyword id="KW-0813">Transport</keyword>
<organism>
    <name type="scientific">Uria lomvia</name>
    <name type="common">Thick-billed murre</name>
    <dbReference type="NCBI Taxonomy" id="28711"/>
    <lineage>
        <taxon>Eukaryota</taxon>
        <taxon>Metazoa</taxon>
        <taxon>Chordata</taxon>
        <taxon>Craniata</taxon>
        <taxon>Vertebrata</taxon>
        <taxon>Euteleostomi</taxon>
        <taxon>Archelosauria</taxon>
        <taxon>Archosauria</taxon>
        <taxon>Dinosauria</taxon>
        <taxon>Saurischia</taxon>
        <taxon>Theropoda</taxon>
        <taxon>Coelurosauria</taxon>
        <taxon>Aves</taxon>
        <taxon>Neognathae</taxon>
        <taxon>Neoaves</taxon>
        <taxon>Charadriiformes</taxon>
        <taxon>Alcidae</taxon>
        <taxon>Uria</taxon>
    </lineage>
</organism>
<comment type="function">
    <text evidence="1">Monomeric heme protein which primary function is to store oxygen and facilitate its diffusion within muscle tissues. Reversibly binds oxygen through a pentacoordinated heme iron and enables its timely and efficient release as needed during periods of heightened demand. Depending on the oxidative conditions of tissues and cells, and in addition to its ability to bind oxygen, it also has a nitrite reductase activity whereby it regulates the production of bioactive nitric oxide. Under stress conditions, like hypoxia and anoxia, it also protects cells against reactive oxygen species thanks to its pseudoperoxidase activity.</text>
</comment>
<comment type="catalytic activity">
    <reaction evidence="1">
        <text>Fe(III)-heme b-[protein] + nitric oxide + H2O = Fe(II)-heme b-[protein] + nitrite + 2 H(+)</text>
        <dbReference type="Rhea" id="RHEA:77711"/>
        <dbReference type="Rhea" id="RHEA-COMP:18975"/>
        <dbReference type="Rhea" id="RHEA-COMP:18976"/>
        <dbReference type="ChEBI" id="CHEBI:15377"/>
        <dbReference type="ChEBI" id="CHEBI:15378"/>
        <dbReference type="ChEBI" id="CHEBI:16301"/>
        <dbReference type="ChEBI" id="CHEBI:16480"/>
        <dbReference type="ChEBI" id="CHEBI:55376"/>
        <dbReference type="ChEBI" id="CHEBI:60344"/>
    </reaction>
    <physiologicalReaction direction="right-to-left" evidence="1">
        <dbReference type="Rhea" id="RHEA:77713"/>
    </physiologicalReaction>
</comment>
<comment type="catalytic activity">
    <reaction evidence="1">
        <text>H2O2 + AH2 = A + 2 H2O</text>
        <dbReference type="Rhea" id="RHEA:30275"/>
        <dbReference type="ChEBI" id="CHEBI:13193"/>
        <dbReference type="ChEBI" id="CHEBI:15377"/>
        <dbReference type="ChEBI" id="CHEBI:16240"/>
        <dbReference type="ChEBI" id="CHEBI:17499"/>
    </reaction>
</comment>
<comment type="subunit">
    <text evidence="2">Monomeric.</text>
</comment>
<comment type="subcellular location">
    <subcellularLocation>
        <location evidence="1">Cytoplasm</location>
        <location evidence="1">Sarcoplasm</location>
    </subcellularLocation>
</comment>
<comment type="similarity">
    <text evidence="5">Belongs to the globin family.</text>
</comment>
<proteinExistence type="evidence at protein level"/>
<name>MYG_URILO</name>
<protein>
    <recommendedName>
        <fullName>Myoglobin</fullName>
    </recommendedName>
    <alternativeName>
        <fullName evidence="1">Nitrite reductase MB</fullName>
        <ecNumber evidence="1">1.7.-.-</ecNumber>
    </alternativeName>
    <alternativeName>
        <fullName evidence="1">Pseudoperoxidase MB</fullName>
        <ecNumber evidence="1">1.11.1.-</ecNumber>
    </alternativeName>
</protein>
<dbReference type="EC" id="1.7.-.-" evidence="1"/>
<dbReference type="EC" id="1.11.1.-" evidence="1"/>
<dbReference type="PIR" id="JC7791">
    <property type="entry name" value="JC7791"/>
</dbReference>
<dbReference type="SMR" id="Q7LZM1"/>
<dbReference type="GO" id="GO:0070062">
    <property type="term" value="C:extracellular exosome"/>
    <property type="evidence" value="ECO:0007669"/>
    <property type="project" value="TreeGrafter"/>
</dbReference>
<dbReference type="GO" id="GO:0016528">
    <property type="term" value="C:sarcoplasm"/>
    <property type="evidence" value="ECO:0000250"/>
    <property type="project" value="UniProtKB"/>
</dbReference>
<dbReference type="GO" id="GO:0020037">
    <property type="term" value="F:heme binding"/>
    <property type="evidence" value="ECO:0007669"/>
    <property type="project" value="InterPro"/>
</dbReference>
<dbReference type="GO" id="GO:0046872">
    <property type="term" value="F:metal ion binding"/>
    <property type="evidence" value="ECO:0007669"/>
    <property type="project" value="UniProtKB-KW"/>
</dbReference>
<dbReference type="GO" id="GO:0098809">
    <property type="term" value="F:nitrite reductase activity"/>
    <property type="evidence" value="ECO:0000250"/>
    <property type="project" value="UniProtKB"/>
</dbReference>
<dbReference type="GO" id="GO:0019825">
    <property type="term" value="F:oxygen binding"/>
    <property type="evidence" value="ECO:0007669"/>
    <property type="project" value="InterPro"/>
</dbReference>
<dbReference type="GO" id="GO:0005344">
    <property type="term" value="F:oxygen carrier activity"/>
    <property type="evidence" value="ECO:0000250"/>
    <property type="project" value="UniProtKB"/>
</dbReference>
<dbReference type="GO" id="GO:0004601">
    <property type="term" value="F:peroxidase activity"/>
    <property type="evidence" value="ECO:0000250"/>
    <property type="project" value="UniProtKB"/>
</dbReference>
<dbReference type="GO" id="GO:0019430">
    <property type="term" value="P:removal of superoxide radicals"/>
    <property type="evidence" value="ECO:0000250"/>
    <property type="project" value="UniProtKB"/>
</dbReference>
<dbReference type="Gene3D" id="6.10.140.2100">
    <property type="match status" value="1"/>
</dbReference>
<dbReference type="Gene3D" id="6.10.140.2110">
    <property type="match status" value="1"/>
</dbReference>
<dbReference type="InterPro" id="IPR000971">
    <property type="entry name" value="Globin"/>
</dbReference>
<dbReference type="InterPro" id="IPR009050">
    <property type="entry name" value="Globin-like_sf"/>
</dbReference>
<dbReference type="InterPro" id="IPR002335">
    <property type="entry name" value="Myoglobin"/>
</dbReference>
<dbReference type="PANTHER" id="PTHR47132">
    <property type="entry name" value="MYOGLOBIN"/>
    <property type="match status" value="1"/>
</dbReference>
<dbReference type="PANTHER" id="PTHR47132:SF1">
    <property type="entry name" value="MYOGLOBIN"/>
    <property type="match status" value="1"/>
</dbReference>
<dbReference type="Pfam" id="PF00042">
    <property type="entry name" value="Globin"/>
    <property type="match status" value="1"/>
</dbReference>
<dbReference type="PRINTS" id="PR00613">
    <property type="entry name" value="MYOGLOBIN"/>
</dbReference>
<dbReference type="SUPFAM" id="SSF46458">
    <property type="entry name" value="Globin-like"/>
    <property type="match status" value="1"/>
</dbReference>
<dbReference type="PROSITE" id="PS01033">
    <property type="entry name" value="GLOBIN"/>
    <property type="match status" value="1"/>
</dbReference>
<gene>
    <name type="primary">MB</name>
</gene>
<evidence type="ECO:0000250" key="1">
    <source>
        <dbReference type="UniProtKB" id="P02144"/>
    </source>
</evidence>
<evidence type="ECO:0000250" key="2">
    <source>
        <dbReference type="UniProtKB" id="P02185"/>
    </source>
</evidence>
<evidence type="ECO:0000250" key="3">
    <source>
        <dbReference type="UniProtKB" id="P02189"/>
    </source>
</evidence>
<evidence type="ECO:0000250" key="4">
    <source>
        <dbReference type="UniProtKB" id="P68082"/>
    </source>
</evidence>
<evidence type="ECO:0000255" key="5">
    <source>
        <dbReference type="PROSITE-ProRule" id="PRU00238"/>
    </source>
</evidence>
<evidence type="ECO:0000269" key="6">
    <source ref="1"/>
</evidence>
<reference key="1">
    <citation type="journal article" date="1998" name="Res. Commun. Biochem. Cell Mol. Biol.">
        <title>Molecular evolution of avian myoglobins from seven species in six different orders including three newly sequenced myoglobins from Japanese goshawk, spot-billed duck and thick-billed murre.</title>
        <authorList>
            <person name="Miyazaki K."/>
            <person name="Uchida T."/>
            <person name="Tsugita A."/>
        </authorList>
    </citation>
    <scope>PROTEIN SEQUENCE OF 2-154</scope>
</reference>